<comment type="function">
    <text evidence="1">Catalyzes the reversible conversion of 2-phosphoglycerate (2-PG) into phosphoenolpyruvate (PEP). It is essential for the degradation of carbohydrates via glycolysis.</text>
</comment>
<comment type="catalytic activity">
    <reaction evidence="1">
        <text>(2R)-2-phosphoglycerate = phosphoenolpyruvate + H2O</text>
        <dbReference type="Rhea" id="RHEA:10164"/>
        <dbReference type="ChEBI" id="CHEBI:15377"/>
        <dbReference type="ChEBI" id="CHEBI:58289"/>
        <dbReference type="ChEBI" id="CHEBI:58702"/>
        <dbReference type="EC" id="4.2.1.11"/>
    </reaction>
</comment>
<comment type="cofactor">
    <cofactor evidence="1">
        <name>Mg(2+)</name>
        <dbReference type="ChEBI" id="CHEBI:18420"/>
    </cofactor>
    <text evidence="1">Binds a second Mg(2+) ion via substrate during catalysis.</text>
</comment>
<comment type="pathway">
    <text evidence="1">Carbohydrate degradation; glycolysis; pyruvate from D-glyceraldehyde 3-phosphate: step 4/5.</text>
</comment>
<comment type="subcellular location">
    <subcellularLocation>
        <location evidence="1">Cytoplasm</location>
    </subcellularLocation>
    <subcellularLocation>
        <location evidence="1">Secreted</location>
    </subcellularLocation>
    <subcellularLocation>
        <location evidence="1">Cell surface</location>
    </subcellularLocation>
    <text evidence="1">Fractions of enolase are present in both the cytoplasm and on the cell surface.</text>
</comment>
<comment type="similarity">
    <text evidence="1">Belongs to the enolase family.</text>
</comment>
<name>ENO_HYPNA</name>
<gene>
    <name evidence="1" type="primary">eno</name>
    <name type="ordered locus">HNE_1980</name>
</gene>
<feature type="chain" id="PRO_0000267045" description="Enolase">
    <location>
        <begin position="1"/>
        <end position="426"/>
    </location>
</feature>
<feature type="region of interest" description="Disordered" evidence="2">
    <location>
        <begin position="32"/>
        <end position="53"/>
    </location>
</feature>
<feature type="active site" description="Proton donor" evidence="1">
    <location>
        <position position="205"/>
    </location>
</feature>
<feature type="active site" description="Proton acceptor" evidence="1">
    <location>
        <position position="337"/>
    </location>
</feature>
<feature type="binding site" evidence="1">
    <location>
        <position position="163"/>
    </location>
    <ligand>
        <name>(2R)-2-phosphoglycerate</name>
        <dbReference type="ChEBI" id="CHEBI:58289"/>
    </ligand>
</feature>
<feature type="binding site" evidence="1">
    <location>
        <position position="242"/>
    </location>
    <ligand>
        <name>Mg(2+)</name>
        <dbReference type="ChEBI" id="CHEBI:18420"/>
    </ligand>
</feature>
<feature type="binding site" evidence="1">
    <location>
        <position position="285"/>
    </location>
    <ligand>
        <name>Mg(2+)</name>
        <dbReference type="ChEBI" id="CHEBI:18420"/>
    </ligand>
</feature>
<feature type="binding site" evidence="1">
    <location>
        <position position="312"/>
    </location>
    <ligand>
        <name>Mg(2+)</name>
        <dbReference type="ChEBI" id="CHEBI:18420"/>
    </ligand>
</feature>
<feature type="binding site" evidence="1">
    <location>
        <position position="337"/>
    </location>
    <ligand>
        <name>(2R)-2-phosphoglycerate</name>
        <dbReference type="ChEBI" id="CHEBI:58289"/>
    </ligand>
</feature>
<feature type="binding site" evidence="1">
    <location>
        <position position="366"/>
    </location>
    <ligand>
        <name>(2R)-2-phosphoglycerate</name>
        <dbReference type="ChEBI" id="CHEBI:58289"/>
    </ligand>
</feature>
<feature type="binding site" evidence="1">
    <location>
        <position position="367"/>
    </location>
    <ligand>
        <name>(2R)-2-phosphoglycerate</name>
        <dbReference type="ChEBI" id="CHEBI:58289"/>
    </ligand>
</feature>
<feature type="binding site" evidence="1">
    <location>
        <position position="388"/>
    </location>
    <ligand>
        <name>(2R)-2-phosphoglycerate</name>
        <dbReference type="ChEBI" id="CHEBI:58289"/>
    </ligand>
</feature>
<organism>
    <name type="scientific">Hyphomonas neptunium (strain ATCC 15444)</name>
    <dbReference type="NCBI Taxonomy" id="228405"/>
    <lineage>
        <taxon>Bacteria</taxon>
        <taxon>Pseudomonadati</taxon>
        <taxon>Pseudomonadota</taxon>
        <taxon>Alphaproteobacteria</taxon>
        <taxon>Hyphomonadales</taxon>
        <taxon>Hyphomonadaceae</taxon>
        <taxon>Hyphomonas</taxon>
    </lineage>
</organism>
<proteinExistence type="inferred from homology"/>
<keyword id="KW-0963">Cytoplasm</keyword>
<keyword id="KW-0324">Glycolysis</keyword>
<keyword id="KW-0456">Lyase</keyword>
<keyword id="KW-0460">Magnesium</keyword>
<keyword id="KW-0479">Metal-binding</keyword>
<keyword id="KW-1185">Reference proteome</keyword>
<keyword id="KW-0964">Secreted</keyword>
<dbReference type="EC" id="4.2.1.11" evidence="1"/>
<dbReference type="EMBL" id="CP000158">
    <property type="protein sequence ID" value="ABI75438.1"/>
    <property type="molecule type" value="Genomic_DNA"/>
</dbReference>
<dbReference type="RefSeq" id="WP_011646980.1">
    <property type="nucleotide sequence ID" value="NC_008358.1"/>
</dbReference>
<dbReference type="SMR" id="Q0C0R3"/>
<dbReference type="STRING" id="228405.HNE_1980"/>
<dbReference type="KEGG" id="hne:HNE_1980"/>
<dbReference type="eggNOG" id="COG0148">
    <property type="taxonomic scope" value="Bacteria"/>
</dbReference>
<dbReference type="HOGENOM" id="CLU_031223_2_1_5"/>
<dbReference type="UniPathway" id="UPA00109">
    <property type="reaction ID" value="UER00187"/>
</dbReference>
<dbReference type="Proteomes" id="UP000001959">
    <property type="component" value="Chromosome"/>
</dbReference>
<dbReference type="GO" id="GO:0009986">
    <property type="term" value="C:cell surface"/>
    <property type="evidence" value="ECO:0007669"/>
    <property type="project" value="UniProtKB-SubCell"/>
</dbReference>
<dbReference type="GO" id="GO:0005576">
    <property type="term" value="C:extracellular region"/>
    <property type="evidence" value="ECO:0007669"/>
    <property type="project" value="UniProtKB-SubCell"/>
</dbReference>
<dbReference type="GO" id="GO:0000015">
    <property type="term" value="C:phosphopyruvate hydratase complex"/>
    <property type="evidence" value="ECO:0007669"/>
    <property type="project" value="InterPro"/>
</dbReference>
<dbReference type="GO" id="GO:0000287">
    <property type="term" value="F:magnesium ion binding"/>
    <property type="evidence" value="ECO:0007669"/>
    <property type="project" value="UniProtKB-UniRule"/>
</dbReference>
<dbReference type="GO" id="GO:0004634">
    <property type="term" value="F:phosphopyruvate hydratase activity"/>
    <property type="evidence" value="ECO:0007669"/>
    <property type="project" value="UniProtKB-UniRule"/>
</dbReference>
<dbReference type="GO" id="GO:0006096">
    <property type="term" value="P:glycolytic process"/>
    <property type="evidence" value="ECO:0007669"/>
    <property type="project" value="UniProtKB-UniRule"/>
</dbReference>
<dbReference type="CDD" id="cd03313">
    <property type="entry name" value="enolase"/>
    <property type="match status" value="1"/>
</dbReference>
<dbReference type="FunFam" id="3.20.20.120:FF:000001">
    <property type="entry name" value="Enolase"/>
    <property type="match status" value="1"/>
</dbReference>
<dbReference type="FunFam" id="3.30.390.10:FF:000001">
    <property type="entry name" value="Enolase"/>
    <property type="match status" value="1"/>
</dbReference>
<dbReference type="Gene3D" id="3.20.20.120">
    <property type="entry name" value="Enolase-like C-terminal domain"/>
    <property type="match status" value="1"/>
</dbReference>
<dbReference type="Gene3D" id="3.30.390.10">
    <property type="entry name" value="Enolase-like, N-terminal domain"/>
    <property type="match status" value="1"/>
</dbReference>
<dbReference type="HAMAP" id="MF_00318">
    <property type="entry name" value="Enolase"/>
    <property type="match status" value="1"/>
</dbReference>
<dbReference type="InterPro" id="IPR000941">
    <property type="entry name" value="Enolase"/>
</dbReference>
<dbReference type="InterPro" id="IPR036849">
    <property type="entry name" value="Enolase-like_C_sf"/>
</dbReference>
<dbReference type="InterPro" id="IPR029017">
    <property type="entry name" value="Enolase-like_N"/>
</dbReference>
<dbReference type="InterPro" id="IPR020810">
    <property type="entry name" value="Enolase_C"/>
</dbReference>
<dbReference type="InterPro" id="IPR020809">
    <property type="entry name" value="Enolase_CS"/>
</dbReference>
<dbReference type="InterPro" id="IPR020811">
    <property type="entry name" value="Enolase_N"/>
</dbReference>
<dbReference type="NCBIfam" id="TIGR01060">
    <property type="entry name" value="eno"/>
    <property type="match status" value="1"/>
</dbReference>
<dbReference type="PANTHER" id="PTHR11902">
    <property type="entry name" value="ENOLASE"/>
    <property type="match status" value="1"/>
</dbReference>
<dbReference type="PANTHER" id="PTHR11902:SF1">
    <property type="entry name" value="ENOLASE"/>
    <property type="match status" value="1"/>
</dbReference>
<dbReference type="Pfam" id="PF00113">
    <property type="entry name" value="Enolase_C"/>
    <property type="match status" value="1"/>
</dbReference>
<dbReference type="Pfam" id="PF03952">
    <property type="entry name" value="Enolase_N"/>
    <property type="match status" value="1"/>
</dbReference>
<dbReference type="PIRSF" id="PIRSF001400">
    <property type="entry name" value="Enolase"/>
    <property type="match status" value="1"/>
</dbReference>
<dbReference type="PRINTS" id="PR00148">
    <property type="entry name" value="ENOLASE"/>
</dbReference>
<dbReference type="SFLD" id="SFLDS00001">
    <property type="entry name" value="Enolase"/>
    <property type="match status" value="1"/>
</dbReference>
<dbReference type="SFLD" id="SFLDF00002">
    <property type="entry name" value="enolase"/>
    <property type="match status" value="1"/>
</dbReference>
<dbReference type="SMART" id="SM01192">
    <property type="entry name" value="Enolase_C"/>
    <property type="match status" value="1"/>
</dbReference>
<dbReference type="SMART" id="SM01193">
    <property type="entry name" value="Enolase_N"/>
    <property type="match status" value="1"/>
</dbReference>
<dbReference type="SUPFAM" id="SSF51604">
    <property type="entry name" value="Enolase C-terminal domain-like"/>
    <property type="match status" value="1"/>
</dbReference>
<dbReference type="SUPFAM" id="SSF54826">
    <property type="entry name" value="Enolase N-terminal domain-like"/>
    <property type="match status" value="1"/>
</dbReference>
<dbReference type="PROSITE" id="PS00164">
    <property type="entry name" value="ENOLASE"/>
    <property type="match status" value="1"/>
</dbReference>
<reference key="1">
    <citation type="journal article" date="2006" name="J. Bacteriol.">
        <title>Comparative genomic evidence for a close relationship between the dimorphic prosthecate bacteria Hyphomonas neptunium and Caulobacter crescentus.</title>
        <authorList>
            <person name="Badger J.H."/>
            <person name="Hoover T.R."/>
            <person name="Brun Y.V."/>
            <person name="Weiner R.M."/>
            <person name="Laub M.T."/>
            <person name="Alexandre G."/>
            <person name="Mrazek J."/>
            <person name="Ren Q."/>
            <person name="Paulsen I.T."/>
            <person name="Nelson K.E."/>
            <person name="Khouri H.M."/>
            <person name="Radune D."/>
            <person name="Sosa J."/>
            <person name="Dodson R.J."/>
            <person name="Sullivan S.A."/>
            <person name="Rosovitz M.J."/>
            <person name="Madupu R."/>
            <person name="Brinkac L.M."/>
            <person name="Durkin A.S."/>
            <person name="Daugherty S.C."/>
            <person name="Kothari S.P."/>
            <person name="Giglio M.G."/>
            <person name="Zhou L."/>
            <person name="Haft D.H."/>
            <person name="Selengut J.D."/>
            <person name="Davidsen T.M."/>
            <person name="Yang Q."/>
            <person name="Zafar N."/>
            <person name="Ward N.L."/>
        </authorList>
    </citation>
    <scope>NUCLEOTIDE SEQUENCE [LARGE SCALE GENOMIC DNA]</scope>
    <source>
        <strain>ATCC 15444</strain>
    </source>
</reference>
<accession>Q0C0R3</accession>
<evidence type="ECO:0000255" key="1">
    <source>
        <dbReference type="HAMAP-Rule" id="MF_00318"/>
    </source>
</evidence>
<evidence type="ECO:0000256" key="2">
    <source>
        <dbReference type="SAM" id="MobiDB-lite"/>
    </source>
</evidence>
<protein>
    <recommendedName>
        <fullName evidence="1">Enolase</fullName>
        <ecNumber evidence="1">4.2.1.11</ecNumber>
    </recommendedName>
    <alternativeName>
        <fullName evidence="1">2-phospho-D-glycerate hydro-lyase</fullName>
    </alternativeName>
    <alternativeName>
        <fullName evidence="1">2-phosphoglycerate dehydratase</fullName>
    </alternativeName>
</protein>
<sequence length="426" mass="45152">MSEIIDIHAREILDSRGNPTIEVDVTLDDGSTGRAAVPSGASTGAYEAHEQRDGDKARYNGKGVLKAVDAVNGEICNELAGMDATEQRLVDTLMIDLDGTENKSRLGANAILGVSLAVAKAAAESSALPLYRYLGGANARILPTPMMNIINGGAHADNPVDIQEFMIMPVSAESISEAVRMGAEVFHALKKTLHDAGHNTNVGDEGGFAPNLASADEAIGFIMKSIEKAGYRPGEDIALALDAASTEFYKNGKYELAGEGKSLSSEQFGQYLADLCGRYPILSIEDGMAEDDWDGWVALTELLGDRVQLVGDDLFVTNPDRLAIGLQKGAANSILVKVNQIGTLSETLDAVELAHLHGYTAVMSHRSGETEDSTIADLAVATNCGQIKTGSLSRSDRIAKYNQLIRIEEELGPIGMYAGLARINAG</sequence>